<dbReference type="EC" id="4.1.1.11" evidence="1"/>
<dbReference type="EMBL" id="LT708304">
    <property type="protein sequence ID" value="SIU02259.1"/>
    <property type="molecule type" value="Genomic_DNA"/>
</dbReference>
<dbReference type="RefSeq" id="NP_857270.1">
    <property type="nucleotide sequence ID" value="NC_002945.3"/>
</dbReference>
<dbReference type="RefSeq" id="WP_003419523.1">
    <property type="nucleotide sequence ID" value="NC_002945.4"/>
</dbReference>
<dbReference type="SMR" id="P65661"/>
<dbReference type="KEGG" id="mbo:BQ2027_MB3631C"/>
<dbReference type="PATRIC" id="fig|233413.5.peg.3977"/>
<dbReference type="UniPathway" id="UPA00028">
    <property type="reaction ID" value="UER00002"/>
</dbReference>
<dbReference type="Proteomes" id="UP000001419">
    <property type="component" value="Chromosome"/>
</dbReference>
<dbReference type="GO" id="GO:0005829">
    <property type="term" value="C:cytosol"/>
    <property type="evidence" value="ECO:0007669"/>
    <property type="project" value="TreeGrafter"/>
</dbReference>
<dbReference type="GO" id="GO:0004068">
    <property type="term" value="F:aspartate 1-decarboxylase activity"/>
    <property type="evidence" value="ECO:0007669"/>
    <property type="project" value="UniProtKB-UniRule"/>
</dbReference>
<dbReference type="GO" id="GO:0006523">
    <property type="term" value="P:alanine biosynthetic process"/>
    <property type="evidence" value="ECO:0007669"/>
    <property type="project" value="InterPro"/>
</dbReference>
<dbReference type="GO" id="GO:0015940">
    <property type="term" value="P:pantothenate biosynthetic process"/>
    <property type="evidence" value="ECO:0007669"/>
    <property type="project" value="UniProtKB-UniRule"/>
</dbReference>
<dbReference type="CDD" id="cd06919">
    <property type="entry name" value="Asp_decarbox"/>
    <property type="match status" value="1"/>
</dbReference>
<dbReference type="Gene3D" id="2.40.40.20">
    <property type="match status" value="1"/>
</dbReference>
<dbReference type="HAMAP" id="MF_00446">
    <property type="entry name" value="PanD"/>
    <property type="match status" value="1"/>
</dbReference>
<dbReference type="InterPro" id="IPR009010">
    <property type="entry name" value="Asp_de-COase-like_dom_sf"/>
</dbReference>
<dbReference type="InterPro" id="IPR003190">
    <property type="entry name" value="Asp_decarbox"/>
</dbReference>
<dbReference type="NCBIfam" id="TIGR00223">
    <property type="entry name" value="panD"/>
    <property type="match status" value="1"/>
</dbReference>
<dbReference type="PANTHER" id="PTHR21012">
    <property type="entry name" value="ASPARTATE 1-DECARBOXYLASE"/>
    <property type="match status" value="1"/>
</dbReference>
<dbReference type="PANTHER" id="PTHR21012:SF0">
    <property type="entry name" value="ASPARTATE 1-DECARBOXYLASE"/>
    <property type="match status" value="1"/>
</dbReference>
<dbReference type="Pfam" id="PF02261">
    <property type="entry name" value="Asp_decarbox"/>
    <property type="match status" value="1"/>
</dbReference>
<dbReference type="PIRSF" id="PIRSF006246">
    <property type="entry name" value="Asp_decarbox"/>
    <property type="match status" value="1"/>
</dbReference>
<dbReference type="SUPFAM" id="SSF50692">
    <property type="entry name" value="ADC-like"/>
    <property type="match status" value="1"/>
</dbReference>
<gene>
    <name evidence="1" type="primary">panD</name>
    <name type="ordered locus">BQ2027_MB3631C</name>
</gene>
<proteinExistence type="inferred from homology"/>
<evidence type="ECO:0000255" key="1">
    <source>
        <dbReference type="HAMAP-Rule" id="MF_00446"/>
    </source>
</evidence>
<reference key="1">
    <citation type="journal article" date="2003" name="Proc. Natl. Acad. Sci. U.S.A.">
        <title>The complete genome sequence of Mycobacterium bovis.</title>
        <authorList>
            <person name="Garnier T."/>
            <person name="Eiglmeier K."/>
            <person name="Camus J.-C."/>
            <person name="Medina N."/>
            <person name="Mansoor H."/>
            <person name="Pryor M."/>
            <person name="Duthoy S."/>
            <person name="Grondin S."/>
            <person name="Lacroix C."/>
            <person name="Monsempe C."/>
            <person name="Simon S."/>
            <person name="Harris B."/>
            <person name="Atkin R."/>
            <person name="Doggett J."/>
            <person name="Mayes R."/>
            <person name="Keating L."/>
            <person name="Wheeler P.R."/>
            <person name="Parkhill J."/>
            <person name="Barrell B.G."/>
            <person name="Cole S.T."/>
            <person name="Gordon S.V."/>
            <person name="Hewinson R.G."/>
        </authorList>
    </citation>
    <scope>NUCLEOTIDE SEQUENCE [LARGE SCALE GENOMIC DNA]</scope>
    <source>
        <strain>ATCC BAA-935 / AF2122/97</strain>
    </source>
</reference>
<reference key="2">
    <citation type="journal article" date="2017" name="Genome Announc.">
        <title>Updated reference genome sequence and annotation of Mycobacterium bovis AF2122/97.</title>
        <authorList>
            <person name="Malone K.M."/>
            <person name="Farrell D."/>
            <person name="Stuber T.P."/>
            <person name="Schubert O.T."/>
            <person name="Aebersold R."/>
            <person name="Robbe-Austerman S."/>
            <person name="Gordon S.V."/>
        </authorList>
    </citation>
    <scope>NUCLEOTIDE SEQUENCE [LARGE SCALE GENOMIC DNA]</scope>
    <scope>GENOME REANNOTATION</scope>
    <source>
        <strain>ATCC BAA-935 / AF2122/97</strain>
    </source>
</reference>
<accession>P65661</accession>
<accession>A0A1R3Y4S7</accession>
<accession>O06281</accession>
<accession>X2BNQ4</accession>
<keyword id="KW-0068">Autocatalytic cleavage</keyword>
<keyword id="KW-0963">Cytoplasm</keyword>
<keyword id="KW-0210">Decarboxylase</keyword>
<keyword id="KW-0456">Lyase</keyword>
<keyword id="KW-0566">Pantothenate biosynthesis</keyword>
<keyword id="KW-0670">Pyruvate</keyword>
<keyword id="KW-1185">Reference proteome</keyword>
<keyword id="KW-0704">Schiff base</keyword>
<keyword id="KW-0865">Zymogen</keyword>
<protein>
    <recommendedName>
        <fullName evidence="1">Aspartate 1-decarboxylase</fullName>
        <ecNumber evidence="1">4.1.1.11</ecNumber>
    </recommendedName>
    <alternativeName>
        <fullName evidence="1">Aspartate alpha-decarboxylase</fullName>
    </alternativeName>
    <component>
        <recommendedName>
            <fullName evidence="1">Aspartate 1-decarboxylase beta chain</fullName>
        </recommendedName>
    </component>
    <component>
        <recommendedName>
            <fullName evidence="1">Aspartate 1-decarboxylase alpha chain</fullName>
        </recommendedName>
    </component>
</protein>
<sequence length="139" mass="14885">MLRTMLKSKIHRATVTCADLHYVGSVTIDADLMDAADLLEGEQVTIVDIDNGARLVTYAITGERGSGVIGINGAAAHLVHPGDLVILIAYATMDDARARTYQPRIVFVDAYNKPIDMGHDPAFVPENAGELLDPRLGVG</sequence>
<comment type="function">
    <text evidence="1">Catalyzes the pyruvoyl-dependent decarboxylation of aspartate to produce beta-alanine.</text>
</comment>
<comment type="catalytic activity">
    <reaction evidence="1">
        <text>L-aspartate + H(+) = beta-alanine + CO2</text>
        <dbReference type="Rhea" id="RHEA:19497"/>
        <dbReference type="ChEBI" id="CHEBI:15378"/>
        <dbReference type="ChEBI" id="CHEBI:16526"/>
        <dbReference type="ChEBI" id="CHEBI:29991"/>
        <dbReference type="ChEBI" id="CHEBI:57966"/>
        <dbReference type="EC" id="4.1.1.11"/>
    </reaction>
</comment>
<comment type="cofactor">
    <cofactor evidence="1">
        <name>pyruvate</name>
        <dbReference type="ChEBI" id="CHEBI:15361"/>
    </cofactor>
    <text evidence="1">Binds 1 pyruvoyl group covalently per subunit.</text>
</comment>
<comment type="pathway">
    <text evidence="1">Cofactor biosynthesis; (R)-pantothenate biosynthesis; beta-alanine from L-aspartate: step 1/1.</text>
</comment>
<comment type="subunit">
    <text evidence="1">Heterooctamer of four alpha and four beta subunits.</text>
</comment>
<comment type="subcellular location">
    <subcellularLocation>
        <location evidence="1">Cytoplasm</location>
    </subcellularLocation>
</comment>
<comment type="PTM">
    <text evidence="1">Is synthesized initially as an inactive proenzyme, which is activated by self-cleavage at a specific serine bond to produce a beta-subunit with a hydroxyl group at its C-terminus and an alpha-subunit with a pyruvoyl group at its N-terminus.</text>
</comment>
<comment type="similarity">
    <text evidence="1">Belongs to the PanD family.</text>
</comment>
<organism>
    <name type="scientific">Mycobacterium bovis (strain ATCC BAA-935 / AF2122/97)</name>
    <dbReference type="NCBI Taxonomy" id="233413"/>
    <lineage>
        <taxon>Bacteria</taxon>
        <taxon>Bacillati</taxon>
        <taxon>Actinomycetota</taxon>
        <taxon>Actinomycetes</taxon>
        <taxon>Mycobacteriales</taxon>
        <taxon>Mycobacteriaceae</taxon>
        <taxon>Mycobacterium</taxon>
        <taxon>Mycobacterium tuberculosis complex</taxon>
    </lineage>
</organism>
<feature type="chain" id="PRO_0000023115" description="Aspartate 1-decarboxylase beta chain" evidence="1">
    <location>
        <begin position="1"/>
        <end position="24"/>
    </location>
</feature>
<feature type="chain" id="PRO_0000023116" description="Aspartate 1-decarboxylase alpha chain" evidence="1">
    <location>
        <begin position="25"/>
        <end position="139"/>
    </location>
</feature>
<feature type="active site" description="Schiff-base intermediate with substrate; via pyruvic acid" evidence="1">
    <location>
        <position position="25"/>
    </location>
</feature>
<feature type="active site" description="Proton donor" evidence="1">
    <location>
        <position position="58"/>
    </location>
</feature>
<feature type="binding site" evidence="1">
    <location>
        <position position="57"/>
    </location>
    <ligand>
        <name>substrate</name>
    </ligand>
</feature>
<feature type="binding site" evidence="1">
    <location>
        <begin position="73"/>
        <end position="75"/>
    </location>
    <ligand>
        <name>substrate</name>
    </ligand>
</feature>
<feature type="modified residue" description="Pyruvic acid (Ser)" evidence="1">
    <location>
        <position position="25"/>
    </location>
</feature>
<name>PAND_MYCBO</name>